<name>UBIG_CROS8</name>
<feature type="chain" id="PRO_1000013901" description="Ubiquinone biosynthesis O-methyltransferase">
    <location>
        <begin position="1"/>
        <end position="243"/>
    </location>
</feature>
<feature type="binding site" evidence="1">
    <location>
        <position position="44"/>
    </location>
    <ligand>
        <name>S-adenosyl-L-methionine</name>
        <dbReference type="ChEBI" id="CHEBI:59789"/>
    </ligand>
</feature>
<feature type="binding site" evidence="1">
    <location>
        <position position="64"/>
    </location>
    <ligand>
        <name>S-adenosyl-L-methionine</name>
        <dbReference type="ChEBI" id="CHEBI:59789"/>
    </ligand>
</feature>
<feature type="binding site" evidence="1">
    <location>
        <position position="85"/>
    </location>
    <ligand>
        <name>S-adenosyl-L-methionine</name>
        <dbReference type="ChEBI" id="CHEBI:59789"/>
    </ligand>
</feature>
<feature type="binding site" evidence="1">
    <location>
        <position position="129"/>
    </location>
    <ligand>
        <name>S-adenosyl-L-methionine</name>
        <dbReference type="ChEBI" id="CHEBI:59789"/>
    </ligand>
</feature>
<reference key="1">
    <citation type="journal article" date="2010" name="PLoS ONE">
        <title>Genome sequence of Cronobacter sakazakii BAA-894 and comparative genomic hybridization analysis with other Cronobacter species.</title>
        <authorList>
            <person name="Kucerova E."/>
            <person name="Clifton S.W."/>
            <person name="Xia X.Q."/>
            <person name="Long F."/>
            <person name="Porwollik S."/>
            <person name="Fulton L."/>
            <person name="Fronick C."/>
            <person name="Minx P."/>
            <person name="Kyung K."/>
            <person name="Warren W."/>
            <person name="Fulton R."/>
            <person name="Feng D."/>
            <person name="Wollam A."/>
            <person name="Shah N."/>
            <person name="Bhonagiri V."/>
            <person name="Nash W.E."/>
            <person name="Hallsworth-Pepin K."/>
            <person name="Wilson R.K."/>
            <person name="McClelland M."/>
            <person name="Forsythe S.J."/>
        </authorList>
    </citation>
    <scope>NUCLEOTIDE SEQUENCE [LARGE SCALE GENOMIC DNA]</scope>
    <source>
        <strain>ATCC BAA-894</strain>
    </source>
</reference>
<accession>A7MPA9</accession>
<sequence>MNAEKPPVAHNVDLEEIAKFEAVASRWWDTEGEFKPLHRINPLRLGYIAERAGGLFGKKVLDVGCGGGILSESMAREGANVTGLDMGAEPLAVARLHALESGVELNYVQQTVEEHAAQHAGAYDVVTCMEMLEHVPDPRSVVQACAQLVKPGGHVFFSTLNRNAKSWLMAVVGAEYVLRMVPKGTHDAKKFIRPSELLGWVDETPLEERHIIGLHYNPLTNRFKLAPGVDVNYMLHTQAKKPV</sequence>
<dbReference type="EC" id="2.1.1.222" evidence="1"/>
<dbReference type="EC" id="2.1.1.64" evidence="1"/>
<dbReference type="EMBL" id="CP000783">
    <property type="protein sequence ID" value="ABU76238.1"/>
    <property type="molecule type" value="Genomic_DNA"/>
</dbReference>
<dbReference type="RefSeq" id="WP_007869503.1">
    <property type="nucleotide sequence ID" value="NC_009778.1"/>
</dbReference>
<dbReference type="SMR" id="A7MPA9"/>
<dbReference type="KEGG" id="esa:ESA_00968"/>
<dbReference type="HOGENOM" id="CLU_042432_5_0_6"/>
<dbReference type="UniPathway" id="UPA00232"/>
<dbReference type="Proteomes" id="UP000000260">
    <property type="component" value="Chromosome"/>
</dbReference>
<dbReference type="GO" id="GO:0102208">
    <property type="term" value="F:2-polyprenyl-6-hydroxyphenol methylase activity"/>
    <property type="evidence" value="ECO:0007669"/>
    <property type="project" value="UniProtKB-EC"/>
</dbReference>
<dbReference type="GO" id="GO:0061542">
    <property type="term" value="F:3-demethylubiquinol 3-O-methyltransferase activity"/>
    <property type="evidence" value="ECO:0007669"/>
    <property type="project" value="UniProtKB-UniRule"/>
</dbReference>
<dbReference type="GO" id="GO:0010420">
    <property type="term" value="F:polyprenyldihydroxybenzoate methyltransferase activity"/>
    <property type="evidence" value="ECO:0007669"/>
    <property type="project" value="InterPro"/>
</dbReference>
<dbReference type="GO" id="GO:0032259">
    <property type="term" value="P:methylation"/>
    <property type="evidence" value="ECO:0007669"/>
    <property type="project" value="UniProtKB-KW"/>
</dbReference>
<dbReference type="CDD" id="cd02440">
    <property type="entry name" value="AdoMet_MTases"/>
    <property type="match status" value="1"/>
</dbReference>
<dbReference type="FunFam" id="3.40.50.150:FF:000028">
    <property type="entry name" value="Ubiquinone biosynthesis O-methyltransferase"/>
    <property type="match status" value="1"/>
</dbReference>
<dbReference type="Gene3D" id="3.40.50.150">
    <property type="entry name" value="Vaccinia Virus protein VP39"/>
    <property type="match status" value="1"/>
</dbReference>
<dbReference type="HAMAP" id="MF_00472">
    <property type="entry name" value="UbiG"/>
    <property type="match status" value="1"/>
</dbReference>
<dbReference type="InterPro" id="IPR029063">
    <property type="entry name" value="SAM-dependent_MTases_sf"/>
</dbReference>
<dbReference type="InterPro" id="IPR010233">
    <property type="entry name" value="UbiG_MeTrfase"/>
</dbReference>
<dbReference type="NCBIfam" id="TIGR01983">
    <property type="entry name" value="UbiG"/>
    <property type="match status" value="1"/>
</dbReference>
<dbReference type="PANTHER" id="PTHR43464">
    <property type="entry name" value="METHYLTRANSFERASE"/>
    <property type="match status" value="1"/>
</dbReference>
<dbReference type="PANTHER" id="PTHR43464:SF19">
    <property type="entry name" value="UBIQUINONE BIOSYNTHESIS O-METHYLTRANSFERASE, MITOCHONDRIAL"/>
    <property type="match status" value="1"/>
</dbReference>
<dbReference type="Pfam" id="PF13489">
    <property type="entry name" value="Methyltransf_23"/>
    <property type="match status" value="1"/>
</dbReference>
<dbReference type="SUPFAM" id="SSF53335">
    <property type="entry name" value="S-adenosyl-L-methionine-dependent methyltransferases"/>
    <property type="match status" value="1"/>
</dbReference>
<evidence type="ECO:0000255" key="1">
    <source>
        <dbReference type="HAMAP-Rule" id="MF_00472"/>
    </source>
</evidence>
<comment type="function">
    <text evidence="1">O-methyltransferase that catalyzes the 2 O-methylation steps in the ubiquinone biosynthetic pathway.</text>
</comment>
<comment type="catalytic activity">
    <reaction evidence="1">
        <text>a 3-demethylubiquinol + S-adenosyl-L-methionine = a ubiquinol + S-adenosyl-L-homocysteine + H(+)</text>
        <dbReference type="Rhea" id="RHEA:44380"/>
        <dbReference type="Rhea" id="RHEA-COMP:9566"/>
        <dbReference type="Rhea" id="RHEA-COMP:10914"/>
        <dbReference type="ChEBI" id="CHEBI:15378"/>
        <dbReference type="ChEBI" id="CHEBI:17976"/>
        <dbReference type="ChEBI" id="CHEBI:57856"/>
        <dbReference type="ChEBI" id="CHEBI:59789"/>
        <dbReference type="ChEBI" id="CHEBI:84422"/>
        <dbReference type="EC" id="2.1.1.64"/>
    </reaction>
</comment>
<comment type="catalytic activity">
    <reaction evidence="1">
        <text>a 3-(all-trans-polyprenyl)benzene-1,2-diol + S-adenosyl-L-methionine = a 2-methoxy-6-(all-trans-polyprenyl)phenol + S-adenosyl-L-homocysteine + H(+)</text>
        <dbReference type="Rhea" id="RHEA:31411"/>
        <dbReference type="Rhea" id="RHEA-COMP:9550"/>
        <dbReference type="Rhea" id="RHEA-COMP:9551"/>
        <dbReference type="ChEBI" id="CHEBI:15378"/>
        <dbReference type="ChEBI" id="CHEBI:57856"/>
        <dbReference type="ChEBI" id="CHEBI:59789"/>
        <dbReference type="ChEBI" id="CHEBI:62729"/>
        <dbReference type="ChEBI" id="CHEBI:62731"/>
        <dbReference type="EC" id="2.1.1.222"/>
    </reaction>
</comment>
<comment type="pathway">
    <text evidence="1">Cofactor biosynthesis; ubiquinone biosynthesis.</text>
</comment>
<comment type="similarity">
    <text evidence="1">Belongs to the methyltransferase superfamily. UbiG/COQ3 family.</text>
</comment>
<gene>
    <name evidence="1" type="primary">ubiG</name>
    <name type="ordered locus">ESA_00968</name>
</gene>
<organism>
    <name type="scientific">Cronobacter sakazakii (strain ATCC BAA-894)</name>
    <name type="common">Enterobacter sakazakii</name>
    <dbReference type="NCBI Taxonomy" id="290339"/>
    <lineage>
        <taxon>Bacteria</taxon>
        <taxon>Pseudomonadati</taxon>
        <taxon>Pseudomonadota</taxon>
        <taxon>Gammaproteobacteria</taxon>
        <taxon>Enterobacterales</taxon>
        <taxon>Enterobacteriaceae</taxon>
        <taxon>Cronobacter</taxon>
    </lineage>
</organism>
<protein>
    <recommendedName>
        <fullName evidence="1">Ubiquinone biosynthesis O-methyltransferase</fullName>
    </recommendedName>
    <alternativeName>
        <fullName evidence="1">2-polyprenyl-6-hydroxyphenol methylase</fullName>
        <ecNumber evidence="1">2.1.1.222</ecNumber>
    </alternativeName>
    <alternativeName>
        <fullName evidence="1">3-demethylubiquinone 3-O-methyltransferase</fullName>
        <ecNumber evidence="1">2.1.1.64</ecNumber>
    </alternativeName>
</protein>
<keyword id="KW-0489">Methyltransferase</keyword>
<keyword id="KW-1185">Reference proteome</keyword>
<keyword id="KW-0949">S-adenosyl-L-methionine</keyword>
<keyword id="KW-0808">Transferase</keyword>
<keyword id="KW-0831">Ubiquinone biosynthesis</keyword>
<proteinExistence type="inferred from homology"/>